<keyword id="KW-0119">Carbohydrate metabolism</keyword>
<keyword id="KW-0378">Hydrolase</keyword>
<keyword id="KW-0464">Manganese</keyword>
<comment type="catalytic activity">
    <reaction evidence="1">
        <text>beta-D-fructose 1,6-bisphosphate + H2O = beta-D-fructose 6-phosphate + phosphate</text>
        <dbReference type="Rhea" id="RHEA:11064"/>
        <dbReference type="ChEBI" id="CHEBI:15377"/>
        <dbReference type="ChEBI" id="CHEBI:32966"/>
        <dbReference type="ChEBI" id="CHEBI:43474"/>
        <dbReference type="ChEBI" id="CHEBI:57634"/>
        <dbReference type="EC" id="3.1.3.11"/>
    </reaction>
</comment>
<comment type="cofactor">
    <cofactor evidence="1">
        <name>Mn(2+)</name>
        <dbReference type="ChEBI" id="CHEBI:29035"/>
    </cofactor>
</comment>
<comment type="pathway">
    <text evidence="1">Carbohydrate biosynthesis; gluconeogenesis.</text>
</comment>
<comment type="similarity">
    <text evidence="1">Belongs to the FBPase class 3 family.</text>
</comment>
<gene>
    <name evidence="1" type="primary">fbp</name>
    <name type="ordered locus">Lm4b_00846</name>
</gene>
<reference key="1">
    <citation type="journal article" date="2012" name="BMC Genomics">
        <title>Comparative genomics and transcriptomics of lineages I, II, and III strains of Listeria monocytogenes.</title>
        <authorList>
            <person name="Hain T."/>
            <person name="Ghai R."/>
            <person name="Billion A."/>
            <person name="Kuenne C.T."/>
            <person name="Steinweg C."/>
            <person name="Izar B."/>
            <person name="Mohamed W."/>
            <person name="Mraheil M."/>
            <person name="Domann E."/>
            <person name="Schaffrath S."/>
            <person name="Karst U."/>
            <person name="Goesmann A."/>
            <person name="Oehm S."/>
            <person name="Puhler A."/>
            <person name="Merkl R."/>
            <person name="Vorwerk S."/>
            <person name="Glaser P."/>
            <person name="Garrido P."/>
            <person name="Rusniok C."/>
            <person name="Buchrieser C."/>
            <person name="Goebel W."/>
            <person name="Chakraborty T."/>
        </authorList>
    </citation>
    <scope>NUCLEOTIDE SEQUENCE [LARGE SCALE GENOMIC DNA]</scope>
    <source>
        <strain>CLIP80459</strain>
    </source>
</reference>
<sequence length="653" mass="75575">MKTIDMKYLRLLAKEYPTIAKTATEIINLEAIMNLPKGTEHFLSDVHGEYSAFEQVLRNGSGVVKRKIRDIFGAELDDAEINSLSTLIYYPEEKMDLLASETEDLQAWYRTTLFRLIELCQYVASKYTRSKVRKAMPEDFAYILEELLHENYNEDDKKLYYEEILQHIISLGRAEEFISALSLLIQQLVVDHLHIVGDVYDRGPYPDKIMDTLMNYHSLDFQWGNHDILWMGAASGSRVCAANVIRISARYLNLDILEDSYGISLRPLALFADEVYKDDPCTYFQPKNEENINYSNAEITQIARMHKAISIIQFKLEGEIINRRKEFDMDHRLLLQFIDYKKGTIHLKGKEYLLLDSHFPTINPEKPYELTDAERELIGKITAAFKNCRRLQKHVQFLYSKGSMFLTYNGNLLYHGCIPLHEDGTFMEMKLRGEKYAGRSLLEQFEILTREAYVRPTGTKEKKYACDIVWYLWTGAISSLFGKSEMTTFERYFVAEKETHTEEKNPYYKLRNNELICKQILEEFGLDGECGHIINGHTPVKEGKGESPIKANGKMLVIDGGFAKAYHKETNLAGYTLLFNSYGLQLVSHQPFTTKEDAIKNETDILSTRQVIEMEINRKRVRDTDIGAKLSEQAEDLKLLLDAYRNGLLHENR</sequence>
<organism>
    <name type="scientific">Listeria monocytogenes serotype 4b (strain CLIP80459)</name>
    <dbReference type="NCBI Taxonomy" id="568819"/>
    <lineage>
        <taxon>Bacteria</taxon>
        <taxon>Bacillati</taxon>
        <taxon>Bacillota</taxon>
        <taxon>Bacilli</taxon>
        <taxon>Bacillales</taxon>
        <taxon>Listeriaceae</taxon>
        <taxon>Listeria</taxon>
    </lineage>
</organism>
<accession>C1L199</accession>
<evidence type="ECO:0000255" key="1">
    <source>
        <dbReference type="HAMAP-Rule" id="MF_01854"/>
    </source>
</evidence>
<proteinExistence type="inferred from homology"/>
<feature type="chain" id="PRO_1000216146" description="Fructose-1,6-bisphosphatase class 3">
    <location>
        <begin position="1"/>
        <end position="653"/>
    </location>
</feature>
<name>F16PC_LISMC</name>
<protein>
    <recommendedName>
        <fullName evidence="1">Fructose-1,6-bisphosphatase class 3</fullName>
        <shortName evidence="1">FBPase class 3</shortName>
        <ecNumber evidence="1">3.1.3.11</ecNumber>
    </recommendedName>
    <alternativeName>
        <fullName evidence="1">D-fructose-1,6-bisphosphate 1-phosphohydrolase class 3</fullName>
    </alternativeName>
</protein>
<dbReference type="EC" id="3.1.3.11" evidence="1"/>
<dbReference type="EMBL" id="FM242711">
    <property type="protein sequence ID" value="CAS04614.1"/>
    <property type="molecule type" value="Genomic_DNA"/>
</dbReference>
<dbReference type="RefSeq" id="WP_003740500.1">
    <property type="nucleotide sequence ID" value="NC_012488.1"/>
</dbReference>
<dbReference type="KEGG" id="lmc:Lm4b_00846"/>
<dbReference type="HOGENOM" id="CLU_028392_2_0_9"/>
<dbReference type="UniPathway" id="UPA00138"/>
<dbReference type="GO" id="GO:0042132">
    <property type="term" value="F:fructose 1,6-bisphosphate 1-phosphatase activity"/>
    <property type="evidence" value="ECO:0007669"/>
    <property type="project" value="UniProtKB-UniRule"/>
</dbReference>
<dbReference type="GO" id="GO:0006094">
    <property type="term" value="P:gluconeogenesis"/>
    <property type="evidence" value="ECO:0007669"/>
    <property type="project" value="UniProtKB-UniRule"/>
</dbReference>
<dbReference type="Gene3D" id="3.60.21.10">
    <property type="match status" value="1"/>
</dbReference>
<dbReference type="HAMAP" id="MF_01854">
    <property type="entry name" value="FBPase_class3"/>
    <property type="match status" value="1"/>
</dbReference>
<dbReference type="InterPro" id="IPR009164">
    <property type="entry name" value="FBPtase_class3"/>
</dbReference>
<dbReference type="InterPro" id="IPR029052">
    <property type="entry name" value="Metallo-depent_PP-like"/>
</dbReference>
<dbReference type="Pfam" id="PF06874">
    <property type="entry name" value="FBPase_2"/>
    <property type="match status" value="1"/>
</dbReference>
<dbReference type="PIRSF" id="PIRSF000906">
    <property type="entry name" value="FBPtase_Bacill"/>
    <property type="match status" value="1"/>
</dbReference>
<dbReference type="SUPFAM" id="SSF56300">
    <property type="entry name" value="Metallo-dependent phosphatases"/>
    <property type="match status" value="1"/>
</dbReference>